<keyword id="KW-0156">Chromatin regulator</keyword>
<keyword id="KW-0227">DNA damage</keyword>
<keyword id="KW-0234">DNA repair</keyword>
<keyword id="KW-0539">Nucleus</keyword>
<keyword id="KW-1185">Reference proteome</keyword>
<keyword id="KW-0804">Transcription</keyword>
<keyword id="KW-0805">Transcription regulation</keyword>
<gene>
    <name type="primary">EAF7</name>
    <name type="ordered locus">DEHA2F20966g</name>
</gene>
<name>EAF7_DEBHA</name>
<sequence>MDEENDMREWSLDDEILLFDLMCDFKPAGHDKDKQMSIIVEKMNENVSEGTKPFSADDIWKKLGGMYDLERVDELEDYIDEDEDSAEEDGAPNEKEEDKKEDIDQSSKDPDSSGLSDVETDMASEREELEVPKSGSRGNNKNKKDRVRKVDTKEDSTAVETKDAEVTNENEDANDDGDDNNEEEDEGNDENEQEDPDDDDQDDDDDENESGEGSLQKRVTRGARKHQHELSDQTGTPKPKKRTRSSAKLDAVETPPPSKRSQKTATPPAQQTPTASAKRRKKSEVQESDADKSNTRRSKRSLVPATTPSKPQAPPIRRSSRKK</sequence>
<comment type="function">
    <text evidence="1">Component of the NuA4 histone acetyltransferase complex which is involved in transcriptional activation of selected genes principally by acetylation of nucleosomal histone H4 and H2A. The NuA4 complex is also involved in DNA repair (By similarity).</text>
</comment>
<comment type="subunit">
    <text evidence="1">Component of the NuA4 histone acetyltransferase complex.</text>
</comment>
<comment type="subcellular location">
    <subcellularLocation>
        <location evidence="1">Nucleus</location>
    </subcellularLocation>
</comment>
<comment type="similarity">
    <text evidence="3">Belongs to the EAF7 family.</text>
</comment>
<reference key="1">
    <citation type="journal article" date="2004" name="Nature">
        <title>Genome evolution in yeasts.</title>
        <authorList>
            <person name="Dujon B."/>
            <person name="Sherman D."/>
            <person name="Fischer G."/>
            <person name="Durrens P."/>
            <person name="Casaregola S."/>
            <person name="Lafontaine I."/>
            <person name="de Montigny J."/>
            <person name="Marck C."/>
            <person name="Neuveglise C."/>
            <person name="Talla E."/>
            <person name="Goffard N."/>
            <person name="Frangeul L."/>
            <person name="Aigle M."/>
            <person name="Anthouard V."/>
            <person name="Babour A."/>
            <person name="Barbe V."/>
            <person name="Barnay S."/>
            <person name="Blanchin S."/>
            <person name="Beckerich J.-M."/>
            <person name="Beyne E."/>
            <person name="Bleykasten C."/>
            <person name="Boisrame A."/>
            <person name="Boyer J."/>
            <person name="Cattolico L."/>
            <person name="Confanioleri F."/>
            <person name="de Daruvar A."/>
            <person name="Despons L."/>
            <person name="Fabre E."/>
            <person name="Fairhead C."/>
            <person name="Ferry-Dumazet H."/>
            <person name="Groppi A."/>
            <person name="Hantraye F."/>
            <person name="Hennequin C."/>
            <person name="Jauniaux N."/>
            <person name="Joyet P."/>
            <person name="Kachouri R."/>
            <person name="Kerrest A."/>
            <person name="Koszul R."/>
            <person name="Lemaire M."/>
            <person name="Lesur I."/>
            <person name="Ma L."/>
            <person name="Muller H."/>
            <person name="Nicaud J.-M."/>
            <person name="Nikolski M."/>
            <person name="Oztas S."/>
            <person name="Ozier-Kalogeropoulos O."/>
            <person name="Pellenz S."/>
            <person name="Potier S."/>
            <person name="Richard G.-F."/>
            <person name="Straub M.-L."/>
            <person name="Suleau A."/>
            <person name="Swennen D."/>
            <person name="Tekaia F."/>
            <person name="Wesolowski-Louvel M."/>
            <person name="Westhof E."/>
            <person name="Wirth B."/>
            <person name="Zeniou-Meyer M."/>
            <person name="Zivanovic Y."/>
            <person name="Bolotin-Fukuhara M."/>
            <person name="Thierry A."/>
            <person name="Bouchier C."/>
            <person name="Caudron B."/>
            <person name="Scarpelli C."/>
            <person name="Gaillardin C."/>
            <person name="Weissenbach J."/>
            <person name="Wincker P."/>
            <person name="Souciet J.-L."/>
        </authorList>
    </citation>
    <scope>NUCLEOTIDE SEQUENCE [LARGE SCALE GENOMIC DNA]</scope>
    <source>
        <strain>ATCC 36239 / CBS 767 / BCRC 21394 / JCM 1990 / NBRC 0083 / IGC 2968</strain>
    </source>
</reference>
<evidence type="ECO:0000250" key="1"/>
<evidence type="ECO:0000256" key="2">
    <source>
        <dbReference type="SAM" id="MobiDB-lite"/>
    </source>
</evidence>
<evidence type="ECO:0000305" key="3"/>
<feature type="chain" id="PRO_0000215879" description="Chromatin modification-related protein EAF7">
    <location>
        <begin position="1"/>
        <end position="323"/>
    </location>
</feature>
<feature type="region of interest" description="Disordered" evidence="2">
    <location>
        <begin position="74"/>
        <end position="323"/>
    </location>
</feature>
<feature type="compositionally biased region" description="Acidic residues" evidence="2">
    <location>
        <begin position="74"/>
        <end position="91"/>
    </location>
</feature>
<feature type="compositionally biased region" description="Basic and acidic residues" evidence="2">
    <location>
        <begin position="92"/>
        <end position="111"/>
    </location>
</feature>
<feature type="compositionally biased region" description="Basic and acidic residues" evidence="2">
    <location>
        <begin position="148"/>
        <end position="165"/>
    </location>
</feature>
<feature type="compositionally biased region" description="Acidic residues" evidence="2">
    <location>
        <begin position="166"/>
        <end position="210"/>
    </location>
</feature>
<feature type="compositionally biased region" description="Basic residues" evidence="2">
    <location>
        <begin position="218"/>
        <end position="227"/>
    </location>
</feature>
<feature type="compositionally biased region" description="Low complexity" evidence="2">
    <location>
        <begin position="263"/>
        <end position="276"/>
    </location>
</feature>
<feature type="compositionally biased region" description="Basic and acidic residues" evidence="2">
    <location>
        <begin position="283"/>
        <end position="294"/>
    </location>
</feature>
<proteinExistence type="inferred from homology"/>
<protein>
    <recommendedName>
        <fullName>Chromatin modification-related protein EAF7</fullName>
    </recommendedName>
</protein>
<dbReference type="EMBL" id="CR382138">
    <property type="protein sequence ID" value="CAG89650.2"/>
    <property type="molecule type" value="Genomic_DNA"/>
</dbReference>
<dbReference type="RefSeq" id="XP_461261.2">
    <property type="nucleotide sequence ID" value="XM_461261.1"/>
</dbReference>
<dbReference type="STRING" id="284592.Q6BKL0"/>
<dbReference type="GeneID" id="2903076"/>
<dbReference type="KEGG" id="dha:DEHA2F20966g"/>
<dbReference type="VEuPathDB" id="FungiDB:DEHA2F20966g"/>
<dbReference type="eggNOG" id="KOG4051">
    <property type="taxonomic scope" value="Eukaryota"/>
</dbReference>
<dbReference type="HOGENOM" id="CLU_860579_0_0_1"/>
<dbReference type="InParanoid" id="Q6BKL0"/>
<dbReference type="OMA" id="FTASEIW"/>
<dbReference type="OrthoDB" id="5595141at2759"/>
<dbReference type="Proteomes" id="UP000000599">
    <property type="component" value="Chromosome F"/>
</dbReference>
<dbReference type="GO" id="GO:0035267">
    <property type="term" value="C:NuA4 histone acetyltransferase complex"/>
    <property type="evidence" value="ECO:0007669"/>
    <property type="project" value="TreeGrafter"/>
</dbReference>
<dbReference type="GO" id="GO:0005634">
    <property type="term" value="C:nucleus"/>
    <property type="evidence" value="ECO:0007669"/>
    <property type="project" value="UniProtKB-SubCell"/>
</dbReference>
<dbReference type="GO" id="GO:0006325">
    <property type="term" value="P:chromatin organization"/>
    <property type="evidence" value="ECO:0007669"/>
    <property type="project" value="UniProtKB-KW"/>
</dbReference>
<dbReference type="GO" id="GO:0006281">
    <property type="term" value="P:DNA repair"/>
    <property type="evidence" value="ECO:0007669"/>
    <property type="project" value="UniProtKB-KW"/>
</dbReference>
<dbReference type="GO" id="GO:0006357">
    <property type="term" value="P:regulation of transcription by RNA polymerase II"/>
    <property type="evidence" value="ECO:0007669"/>
    <property type="project" value="TreeGrafter"/>
</dbReference>
<dbReference type="InterPro" id="IPR012423">
    <property type="entry name" value="Eaf7/MRGBP"/>
</dbReference>
<dbReference type="PANTHER" id="PTHR13581">
    <property type="entry name" value="MRG-BINDING PROTEIN"/>
    <property type="match status" value="1"/>
</dbReference>
<dbReference type="PANTHER" id="PTHR13581:SF5">
    <property type="entry name" value="MRG_MORF4L-BINDING PROTEIN"/>
    <property type="match status" value="1"/>
</dbReference>
<dbReference type="Pfam" id="PF07904">
    <property type="entry name" value="Eaf7"/>
    <property type="match status" value="1"/>
</dbReference>
<accession>Q6BKL0</accession>
<organism>
    <name type="scientific">Debaryomyces hansenii (strain ATCC 36239 / CBS 767 / BCRC 21394 / JCM 1990 / NBRC 0083 / IGC 2968)</name>
    <name type="common">Yeast</name>
    <name type="synonym">Torulaspora hansenii</name>
    <dbReference type="NCBI Taxonomy" id="284592"/>
    <lineage>
        <taxon>Eukaryota</taxon>
        <taxon>Fungi</taxon>
        <taxon>Dikarya</taxon>
        <taxon>Ascomycota</taxon>
        <taxon>Saccharomycotina</taxon>
        <taxon>Pichiomycetes</taxon>
        <taxon>Debaryomycetaceae</taxon>
        <taxon>Debaryomyces</taxon>
    </lineage>
</organism>